<comment type="function">
    <text evidence="1">The glycine cleavage system catalyzes the degradation of glycine.</text>
</comment>
<comment type="catalytic activity">
    <reaction evidence="1">
        <text>N(6)-[(R)-S(8)-aminomethyldihydrolipoyl]-L-lysyl-[protein] + (6S)-5,6,7,8-tetrahydrofolate = N(6)-[(R)-dihydrolipoyl]-L-lysyl-[protein] + (6R)-5,10-methylene-5,6,7,8-tetrahydrofolate + NH4(+)</text>
        <dbReference type="Rhea" id="RHEA:16945"/>
        <dbReference type="Rhea" id="RHEA-COMP:10475"/>
        <dbReference type="Rhea" id="RHEA-COMP:10492"/>
        <dbReference type="ChEBI" id="CHEBI:15636"/>
        <dbReference type="ChEBI" id="CHEBI:28938"/>
        <dbReference type="ChEBI" id="CHEBI:57453"/>
        <dbReference type="ChEBI" id="CHEBI:83100"/>
        <dbReference type="ChEBI" id="CHEBI:83143"/>
        <dbReference type="EC" id="2.1.2.10"/>
    </reaction>
</comment>
<comment type="subunit">
    <text evidence="1">The glycine cleavage system is composed of four proteins: P, T, L and H.</text>
</comment>
<comment type="similarity">
    <text evidence="1">Belongs to the GcvT family.</text>
</comment>
<keyword id="KW-0032">Aminotransferase</keyword>
<keyword id="KW-0808">Transferase</keyword>
<evidence type="ECO:0000255" key="1">
    <source>
        <dbReference type="HAMAP-Rule" id="MF_00259"/>
    </source>
</evidence>
<name>GCST_ENT38</name>
<organism>
    <name type="scientific">Enterobacter sp. (strain 638)</name>
    <dbReference type="NCBI Taxonomy" id="399742"/>
    <lineage>
        <taxon>Bacteria</taxon>
        <taxon>Pseudomonadati</taxon>
        <taxon>Pseudomonadota</taxon>
        <taxon>Gammaproteobacteria</taxon>
        <taxon>Enterobacterales</taxon>
        <taxon>Enterobacteriaceae</taxon>
        <taxon>Enterobacter</taxon>
    </lineage>
</organism>
<sequence>MAQQTPLYEQHTLCGARMVDFHGWMMPLHYGSQIDEHHAVRTDAGMFDVSHMTIVDLRGSRTREFLRYLLANDVAKLKTPGKALYSGMLNASGGVIDDLIVYYFTEDFFRLVVNSATREKDLSWISQHAEKYAVEITVRDDLSLIAVQGPNAQAKAATLFTDEQRHATEGMKPFFGVQAGDLFIATTGYTGEAGYEIAMPNEKAAEFWHALVEAGVKPAGLGARDTLRLEAGMNLYSQEMDETVSPLAANMGWTIAWEPADREFIGREALEMQREKGTDQLVGLVMTEKGVLRNELPVRFTDELGNQREGMITSGTFSPTLGYSIALARVPAGIGETAIVQIRNREMPVNVTKPIFVRAGKPVA</sequence>
<proteinExistence type="inferred from homology"/>
<accession>A4WE57</accession>
<gene>
    <name evidence="1" type="primary">gcvT</name>
    <name type="ordered locus">Ent638_3324</name>
</gene>
<feature type="chain" id="PRO_1000059086" description="Aminomethyltransferase">
    <location>
        <begin position="1"/>
        <end position="364"/>
    </location>
</feature>
<protein>
    <recommendedName>
        <fullName evidence="1">Aminomethyltransferase</fullName>
        <ecNumber evidence="1">2.1.2.10</ecNumber>
    </recommendedName>
    <alternativeName>
        <fullName evidence="1">Glycine cleavage system T protein</fullName>
    </alternativeName>
</protein>
<dbReference type="EC" id="2.1.2.10" evidence="1"/>
<dbReference type="EMBL" id="CP000653">
    <property type="protein sequence ID" value="ABP61987.1"/>
    <property type="molecule type" value="Genomic_DNA"/>
</dbReference>
<dbReference type="RefSeq" id="WP_015960315.1">
    <property type="nucleotide sequence ID" value="NC_009436.1"/>
</dbReference>
<dbReference type="SMR" id="A4WE57"/>
<dbReference type="STRING" id="399742.Ent638_3324"/>
<dbReference type="KEGG" id="ent:Ent638_3324"/>
<dbReference type="eggNOG" id="COG0404">
    <property type="taxonomic scope" value="Bacteria"/>
</dbReference>
<dbReference type="HOGENOM" id="CLU_007884_10_2_6"/>
<dbReference type="OrthoDB" id="9774591at2"/>
<dbReference type="Proteomes" id="UP000000230">
    <property type="component" value="Chromosome"/>
</dbReference>
<dbReference type="GO" id="GO:0005829">
    <property type="term" value="C:cytosol"/>
    <property type="evidence" value="ECO:0007669"/>
    <property type="project" value="TreeGrafter"/>
</dbReference>
<dbReference type="GO" id="GO:0005960">
    <property type="term" value="C:glycine cleavage complex"/>
    <property type="evidence" value="ECO:0007669"/>
    <property type="project" value="InterPro"/>
</dbReference>
<dbReference type="GO" id="GO:0004047">
    <property type="term" value="F:aminomethyltransferase activity"/>
    <property type="evidence" value="ECO:0007669"/>
    <property type="project" value="UniProtKB-UniRule"/>
</dbReference>
<dbReference type="GO" id="GO:0008483">
    <property type="term" value="F:transaminase activity"/>
    <property type="evidence" value="ECO:0007669"/>
    <property type="project" value="UniProtKB-KW"/>
</dbReference>
<dbReference type="GO" id="GO:0019464">
    <property type="term" value="P:glycine decarboxylation via glycine cleavage system"/>
    <property type="evidence" value="ECO:0007669"/>
    <property type="project" value="UniProtKB-UniRule"/>
</dbReference>
<dbReference type="FunFam" id="2.40.30.110:FF:000001">
    <property type="entry name" value="Aminomethyltransferase"/>
    <property type="match status" value="1"/>
</dbReference>
<dbReference type="FunFam" id="3.30.70.1400:FF:000001">
    <property type="entry name" value="Aminomethyltransferase"/>
    <property type="match status" value="1"/>
</dbReference>
<dbReference type="FunFam" id="4.10.1250.10:FF:000001">
    <property type="entry name" value="Aminomethyltransferase"/>
    <property type="match status" value="1"/>
</dbReference>
<dbReference type="Gene3D" id="2.40.30.110">
    <property type="entry name" value="Aminomethyltransferase beta-barrel domains"/>
    <property type="match status" value="1"/>
</dbReference>
<dbReference type="Gene3D" id="3.30.70.1400">
    <property type="entry name" value="Aminomethyltransferase beta-barrel domains"/>
    <property type="match status" value="1"/>
</dbReference>
<dbReference type="Gene3D" id="4.10.1250.10">
    <property type="entry name" value="Aminomethyltransferase fragment"/>
    <property type="match status" value="1"/>
</dbReference>
<dbReference type="Gene3D" id="3.30.1360.120">
    <property type="entry name" value="Probable tRNA modification gtpase trme, domain 1"/>
    <property type="match status" value="1"/>
</dbReference>
<dbReference type="HAMAP" id="MF_00259">
    <property type="entry name" value="GcvT"/>
    <property type="match status" value="1"/>
</dbReference>
<dbReference type="InterPro" id="IPR006223">
    <property type="entry name" value="GCS_T"/>
</dbReference>
<dbReference type="InterPro" id="IPR022903">
    <property type="entry name" value="GCS_T_bac"/>
</dbReference>
<dbReference type="InterPro" id="IPR013977">
    <property type="entry name" value="GCST_C"/>
</dbReference>
<dbReference type="InterPro" id="IPR006222">
    <property type="entry name" value="GCV_T_N"/>
</dbReference>
<dbReference type="InterPro" id="IPR028896">
    <property type="entry name" value="GcvT/YgfZ/DmdA"/>
</dbReference>
<dbReference type="InterPro" id="IPR029043">
    <property type="entry name" value="GcvT/YgfZ_C"/>
</dbReference>
<dbReference type="InterPro" id="IPR027266">
    <property type="entry name" value="TrmE/GcvT_dom1"/>
</dbReference>
<dbReference type="NCBIfam" id="TIGR00528">
    <property type="entry name" value="gcvT"/>
    <property type="match status" value="1"/>
</dbReference>
<dbReference type="NCBIfam" id="NF001567">
    <property type="entry name" value="PRK00389.1"/>
    <property type="match status" value="1"/>
</dbReference>
<dbReference type="PANTHER" id="PTHR43757">
    <property type="entry name" value="AMINOMETHYLTRANSFERASE"/>
    <property type="match status" value="1"/>
</dbReference>
<dbReference type="PANTHER" id="PTHR43757:SF2">
    <property type="entry name" value="AMINOMETHYLTRANSFERASE, MITOCHONDRIAL"/>
    <property type="match status" value="1"/>
</dbReference>
<dbReference type="Pfam" id="PF01571">
    <property type="entry name" value="GCV_T"/>
    <property type="match status" value="1"/>
</dbReference>
<dbReference type="Pfam" id="PF08669">
    <property type="entry name" value="GCV_T_C"/>
    <property type="match status" value="1"/>
</dbReference>
<dbReference type="PIRSF" id="PIRSF006487">
    <property type="entry name" value="GcvT"/>
    <property type="match status" value="1"/>
</dbReference>
<dbReference type="SUPFAM" id="SSF101790">
    <property type="entry name" value="Aminomethyltransferase beta-barrel domain"/>
    <property type="match status" value="1"/>
</dbReference>
<dbReference type="SUPFAM" id="SSF103025">
    <property type="entry name" value="Folate-binding domain"/>
    <property type="match status" value="1"/>
</dbReference>
<reference key="1">
    <citation type="journal article" date="2010" name="PLoS Genet.">
        <title>Genome sequence of the plant growth promoting endophytic bacterium Enterobacter sp. 638.</title>
        <authorList>
            <person name="Taghavi S."/>
            <person name="van der Lelie D."/>
            <person name="Hoffman A."/>
            <person name="Zhang Y.B."/>
            <person name="Walla M.D."/>
            <person name="Vangronsveld J."/>
            <person name="Newman L."/>
            <person name="Monchy S."/>
        </authorList>
    </citation>
    <scope>NUCLEOTIDE SEQUENCE [LARGE SCALE GENOMIC DNA]</scope>
    <source>
        <strain>638</strain>
    </source>
</reference>